<evidence type="ECO:0000255" key="1">
    <source>
        <dbReference type="HAMAP-Rule" id="MF_00251"/>
    </source>
</evidence>
<evidence type="ECO:0000305" key="2"/>
<comment type="similarity">
    <text evidence="1">Belongs to the bacterial ribosomal protein bL36 family.</text>
</comment>
<keyword id="KW-0687">Ribonucleoprotein</keyword>
<keyword id="KW-0689">Ribosomal protein</keyword>
<name>RL362_PAEAT</name>
<proteinExistence type="inferred from homology"/>
<dbReference type="EMBL" id="CP000474">
    <property type="protein sequence ID" value="ABM09148.1"/>
    <property type="molecule type" value="Genomic_DNA"/>
</dbReference>
<dbReference type="SMR" id="A1R8R8"/>
<dbReference type="STRING" id="290340.AAur_2921"/>
<dbReference type="KEGG" id="aau:AAur_2921"/>
<dbReference type="eggNOG" id="COG0257">
    <property type="taxonomic scope" value="Bacteria"/>
</dbReference>
<dbReference type="HOGENOM" id="CLU_135723_6_2_11"/>
<dbReference type="OrthoDB" id="9802520at2"/>
<dbReference type="Proteomes" id="UP000000637">
    <property type="component" value="Chromosome"/>
</dbReference>
<dbReference type="GO" id="GO:0005737">
    <property type="term" value="C:cytoplasm"/>
    <property type="evidence" value="ECO:0007669"/>
    <property type="project" value="UniProtKB-ARBA"/>
</dbReference>
<dbReference type="GO" id="GO:1990904">
    <property type="term" value="C:ribonucleoprotein complex"/>
    <property type="evidence" value="ECO:0007669"/>
    <property type="project" value="UniProtKB-KW"/>
</dbReference>
<dbReference type="GO" id="GO:0005840">
    <property type="term" value="C:ribosome"/>
    <property type="evidence" value="ECO:0007669"/>
    <property type="project" value="UniProtKB-KW"/>
</dbReference>
<dbReference type="GO" id="GO:0003735">
    <property type="term" value="F:structural constituent of ribosome"/>
    <property type="evidence" value="ECO:0007669"/>
    <property type="project" value="InterPro"/>
</dbReference>
<dbReference type="GO" id="GO:0006412">
    <property type="term" value="P:translation"/>
    <property type="evidence" value="ECO:0007669"/>
    <property type="project" value="UniProtKB-UniRule"/>
</dbReference>
<dbReference type="HAMAP" id="MF_00251">
    <property type="entry name" value="Ribosomal_bL36"/>
    <property type="match status" value="1"/>
</dbReference>
<dbReference type="InterPro" id="IPR000473">
    <property type="entry name" value="Ribosomal_bL36"/>
</dbReference>
<dbReference type="InterPro" id="IPR035977">
    <property type="entry name" value="Ribosomal_bL36_sp"/>
</dbReference>
<dbReference type="NCBIfam" id="TIGR01022">
    <property type="entry name" value="rpmJ_bact"/>
    <property type="match status" value="1"/>
</dbReference>
<dbReference type="PANTHER" id="PTHR42888">
    <property type="entry name" value="50S RIBOSOMAL PROTEIN L36, CHLOROPLASTIC"/>
    <property type="match status" value="1"/>
</dbReference>
<dbReference type="PANTHER" id="PTHR42888:SF1">
    <property type="entry name" value="LARGE RIBOSOMAL SUBUNIT PROTEIN BL36C"/>
    <property type="match status" value="1"/>
</dbReference>
<dbReference type="Pfam" id="PF00444">
    <property type="entry name" value="Ribosomal_L36"/>
    <property type="match status" value="1"/>
</dbReference>
<dbReference type="SUPFAM" id="SSF57840">
    <property type="entry name" value="Ribosomal protein L36"/>
    <property type="match status" value="1"/>
</dbReference>
<dbReference type="PROSITE" id="PS00828">
    <property type="entry name" value="RIBOSOMAL_L36"/>
    <property type="match status" value="1"/>
</dbReference>
<feature type="chain" id="PRO_0000344642" description="Large ribosomal subunit protein bL36B">
    <location>
        <begin position="1"/>
        <end position="37"/>
    </location>
</feature>
<organism>
    <name type="scientific">Paenarthrobacter aurescens (strain TC1)</name>
    <dbReference type="NCBI Taxonomy" id="290340"/>
    <lineage>
        <taxon>Bacteria</taxon>
        <taxon>Bacillati</taxon>
        <taxon>Actinomycetota</taxon>
        <taxon>Actinomycetes</taxon>
        <taxon>Micrococcales</taxon>
        <taxon>Micrococcaceae</taxon>
        <taxon>Paenarthrobacter</taxon>
    </lineage>
</organism>
<reference key="1">
    <citation type="journal article" date="2006" name="PLoS Genet.">
        <title>Secrets of soil survival revealed by the genome sequence of Arthrobacter aurescens TC1.</title>
        <authorList>
            <person name="Mongodin E.F."/>
            <person name="Shapir N."/>
            <person name="Daugherty S.C."/>
            <person name="DeBoy R.T."/>
            <person name="Emerson J.B."/>
            <person name="Shvartzbeyn A."/>
            <person name="Radune D."/>
            <person name="Vamathevan J."/>
            <person name="Riggs F."/>
            <person name="Grinberg V."/>
            <person name="Khouri H.M."/>
            <person name="Wackett L.P."/>
            <person name="Nelson K.E."/>
            <person name="Sadowsky M.J."/>
        </authorList>
    </citation>
    <scope>NUCLEOTIDE SEQUENCE [LARGE SCALE GENOMIC DNA]</scope>
    <source>
        <strain>TC1</strain>
    </source>
</reference>
<accession>A1R8R8</accession>
<gene>
    <name evidence="1" type="primary">rpmJ2</name>
    <name type="ordered locus">AAur_2921</name>
</gene>
<protein>
    <recommendedName>
        <fullName evidence="1">Large ribosomal subunit protein bL36B</fullName>
    </recommendedName>
    <alternativeName>
        <fullName evidence="2">50S ribosomal protein L36 2</fullName>
    </alternativeName>
</protein>
<sequence>MKVKPSVKQICDKCKVIRRNGRVMVICENPRHKQRQG</sequence>